<name>Y4688_AZOVD</name>
<comment type="similarity">
    <text evidence="1">Belongs to the UPF0229 family.</text>
</comment>
<gene>
    <name type="ordered locus">Avin_46880</name>
</gene>
<dbReference type="EMBL" id="CP001157">
    <property type="protein sequence ID" value="ACO80793.1"/>
    <property type="molecule type" value="Genomic_DNA"/>
</dbReference>
<dbReference type="RefSeq" id="WP_012703156.1">
    <property type="nucleotide sequence ID" value="NC_012560.1"/>
</dbReference>
<dbReference type="STRING" id="322710.Avin_46880"/>
<dbReference type="EnsemblBacteria" id="ACO80793">
    <property type="protein sequence ID" value="ACO80793"/>
    <property type="gene ID" value="Avin_46880"/>
</dbReference>
<dbReference type="GeneID" id="88187563"/>
<dbReference type="KEGG" id="avn:Avin_46880"/>
<dbReference type="eggNOG" id="COG2718">
    <property type="taxonomic scope" value="Bacteria"/>
</dbReference>
<dbReference type="HOGENOM" id="CLU_049702_0_0_6"/>
<dbReference type="OrthoDB" id="9788289at2"/>
<dbReference type="Proteomes" id="UP000002424">
    <property type="component" value="Chromosome"/>
</dbReference>
<dbReference type="HAMAP" id="MF_01232">
    <property type="entry name" value="UPF0229"/>
    <property type="match status" value="1"/>
</dbReference>
<dbReference type="InterPro" id="IPR006698">
    <property type="entry name" value="UPF0229"/>
</dbReference>
<dbReference type="NCBIfam" id="NF003707">
    <property type="entry name" value="PRK05325.1-2"/>
    <property type="match status" value="1"/>
</dbReference>
<dbReference type="NCBIfam" id="NF003708">
    <property type="entry name" value="PRK05325.1-3"/>
    <property type="match status" value="1"/>
</dbReference>
<dbReference type="PANTHER" id="PTHR30510">
    <property type="entry name" value="UPF0229 PROTEIN YEAH"/>
    <property type="match status" value="1"/>
</dbReference>
<dbReference type="PANTHER" id="PTHR30510:SF2">
    <property type="entry name" value="UPF0229 PROTEIN YEAH"/>
    <property type="match status" value="1"/>
</dbReference>
<dbReference type="Pfam" id="PF04285">
    <property type="entry name" value="DUF444"/>
    <property type="match status" value="1"/>
</dbReference>
<feature type="chain" id="PRO_1000214025" description="UPF0229 protein Avin_46880">
    <location>
        <begin position="1"/>
        <end position="424"/>
    </location>
</feature>
<feature type="region of interest" description="Disordered" evidence="2">
    <location>
        <begin position="57"/>
        <end position="108"/>
    </location>
</feature>
<feature type="compositionally biased region" description="Gly residues" evidence="2">
    <location>
        <begin position="92"/>
        <end position="101"/>
    </location>
</feature>
<evidence type="ECO:0000255" key="1">
    <source>
        <dbReference type="HAMAP-Rule" id="MF_01232"/>
    </source>
</evidence>
<evidence type="ECO:0000256" key="2">
    <source>
        <dbReference type="SAM" id="MobiDB-lite"/>
    </source>
</evidence>
<protein>
    <recommendedName>
        <fullName evidence="1">UPF0229 protein Avin_46880</fullName>
    </recommendedName>
</protein>
<sequence>MSYVIDRRLNGKNKSTVNRQRFLRRYRDHIKKAVEEAVSRRSITDMEHGEQISIPGRDIDEPVLHHGRGGKQTIVHPGNKEFTAGERIPRPSGGGGGGSGSGKASNSGEGIDDFVFQITQEEFLDFMFEDLELPNLVKRHITGADTFKTVRAGISSEGNPSRINIVRTLRSAHARRIALSGNSRAKLREAKAELERLKIEEPDNFGDIQKLEAEITRLRMRIERVPYLDTFDLKYNLLVKQPNPSSKAVMFCLMDVSGSMTQATKDIAKRFFILLYLFLKRSYDKIDVVFIRHHTSAKEVDEEEFFYSRETGGTIVSSALKMMQEVMVERYPLNEWNIYAAQASDGDNWNDDSPICRDILIKQIMPFVQYYSYVEITPREHQALWYEYESVREAFPDSFAQQQIVSAADIYPVFRELFQRRLAT</sequence>
<organism>
    <name type="scientific">Azotobacter vinelandii (strain DJ / ATCC BAA-1303)</name>
    <dbReference type="NCBI Taxonomy" id="322710"/>
    <lineage>
        <taxon>Bacteria</taxon>
        <taxon>Pseudomonadati</taxon>
        <taxon>Pseudomonadota</taxon>
        <taxon>Gammaproteobacteria</taxon>
        <taxon>Pseudomonadales</taxon>
        <taxon>Pseudomonadaceae</taxon>
        <taxon>Azotobacter</taxon>
    </lineage>
</organism>
<proteinExistence type="inferred from homology"/>
<accession>C1DIX4</accession>
<reference key="1">
    <citation type="journal article" date="2009" name="J. Bacteriol.">
        <title>Genome sequence of Azotobacter vinelandii, an obligate aerobe specialized to support diverse anaerobic metabolic processes.</title>
        <authorList>
            <person name="Setubal J.C."/>
            <person name="Dos Santos P."/>
            <person name="Goldman B.S."/>
            <person name="Ertesvaag H."/>
            <person name="Espin G."/>
            <person name="Rubio L.M."/>
            <person name="Valla S."/>
            <person name="Almeida N.F."/>
            <person name="Balasubramanian D."/>
            <person name="Cromes L."/>
            <person name="Curatti L."/>
            <person name="Du Z."/>
            <person name="Godsy E."/>
            <person name="Goodner B."/>
            <person name="Hellner-Burris K."/>
            <person name="Hernandez J.A."/>
            <person name="Houmiel K."/>
            <person name="Imperial J."/>
            <person name="Kennedy C."/>
            <person name="Larson T.J."/>
            <person name="Latreille P."/>
            <person name="Ligon L.S."/>
            <person name="Lu J."/>
            <person name="Maerk M."/>
            <person name="Miller N.M."/>
            <person name="Norton S."/>
            <person name="O'Carroll I.P."/>
            <person name="Paulsen I."/>
            <person name="Raulfs E.C."/>
            <person name="Roemer R."/>
            <person name="Rosser J."/>
            <person name="Segura D."/>
            <person name="Slater S."/>
            <person name="Stricklin S.L."/>
            <person name="Studholme D.J."/>
            <person name="Sun J."/>
            <person name="Viana C.J."/>
            <person name="Wallin E."/>
            <person name="Wang B."/>
            <person name="Wheeler C."/>
            <person name="Zhu H."/>
            <person name="Dean D.R."/>
            <person name="Dixon R."/>
            <person name="Wood D."/>
        </authorList>
    </citation>
    <scope>NUCLEOTIDE SEQUENCE [LARGE SCALE GENOMIC DNA]</scope>
    <source>
        <strain>DJ / ATCC BAA-1303</strain>
    </source>
</reference>